<accession>P9WKP9</accession>
<accession>L0T813</accession>
<accession>P64749</accession>
<accession>Q10553</accession>
<gene>
    <name type="ordered locus">Rv0894</name>
    <name type="ORF">MTCY31.22</name>
</gene>
<protein>
    <recommendedName>
        <fullName>Uncharacterized protein Rv0894</fullName>
    </recommendedName>
</protein>
<reference key="1">
    <citation type="journal article" date="1998" name="Nature">
        <title>Deciphering the biology of Mycobacterium tuberculosis from the complete genome sequence.</title>
        <authorList>
            <person name="Cole S.T."/>
            <person name="Brosch R."/>
            <person name="Parkhill J."/>
            <person name="Garnier T."/>
            <person name="Churcher C.M."/>
            <person name="Harris D.E."/>
            <person name="Gordon S.V."/>
            <person name="Eiglmeier K."/>
            <person name="Gas S."/>
            <person name="Barry C.E. III"/>
            <person name="Tekaia F."/>
            <person name="Badcock K."/>
            <person name="Basham D."/>
            <person name="Brown D."/>
            <person name="Chillingworth T."/>
            <person name="Connor R."/>
            <person name="Davies R.M."/>
            <person name="Devlin K."/>
            <person name="Feltwell T."/>
            <person name="Gentles S."/>
            <person name="Hamlin N."/>
            <person name="Holroyd S."/>
            <person name="Hornsby T."/>
            <person name="Jagels K."/>
            <person name="Krogh A."/>
            <person name="McLean J."/>
            <person name="Moule S."/>
            <person name="Murphy L.D."/>
            <person name="Oliver S."/>
            <person name="Osborne J."/>
            <person name="Quail M.A."/>
            <person name="Rajandream M.A."/>
            <person name="Rogers J."/>
            <person name="Rutter S."/>
            <person name="Seeger K."/>
            <person name="Skelton S."/>
            <person name="Squares S."/>
            <person name="Squares R."/>
            <person name="Sulston J.E."/>
            <person name="Taylor K."/>
            <person name="Whitehead S."/>
            <person name="Barrell B.G."/>
        </authorList>
    </citation>
    <scope>NUCLEOTIDE SEQUENCE [LARGE SCALE GENOMIC DNA]</scope>
    <source>
        <strain>ATCC 25618 / H37Rv</strain>
    </source>
</reference>
<reference key="2">
    <citation type="journal article" date="2008" name="BMC Syst. Biol.">
        <title>targetTB: a target identification pipeline for Mycobacterium tuberculosis through an interactome, reactome and genome-scale structural analysis.</title>
        <authorList>
            <person name="Raman K."/>
            <person name="Yeturu K."/>
            <person name="Chandra N."/>
        </authorList>
    </citation>
    <scope>IDENTIFICATION AS A DRUG TARGET [LARGE SCALE ANALYSIS]</scope>
</reference>
<dbReference type="EMBL" id="AL123456">
    <property type="protein sequence ID" value="CCP43642.1"/>
    <property type="molecule type" value="Genomic_DNA"/>
</dbReference>
<dbReference type="PIR" id="C70782">
    <property type="entry name" value="C70782"/>
</dbReference>
<dbReference type="RefSeq" id="NP_215409.1">
    <property type="nucleotide sequence ID" value="NC_000962.3"/>
</dbReference>
<dbReference type="RefSeq" id="WP_003404660.1">
    <property type="nucleotide sequence ID" value="NZ_NVQJ01000001.1"/>
</dbReference>
<dbReference type="SMR" id="P9WKP9"/>
<dbReference type="STRING" id="83332.Rv0894"/>
<dbReference type="PaxDb" id="83332-Rv0894"/>
<dbReference type="DNASU" id="885199"/>
<dbReference type="GeneID" id="885199"/>
<dbReference type="KEGG" id="mtu:Rv0894"/>
<dbReference type="KEGG" id="mtv:RVBD_0894"/>
<dbReference type="TubercuList" id="Rv0894"/>
<dbReference type="eggNOG" id="COG3903">
    <property type="taxonomic scope" value="Bacteria"/>
</dbReference>
<dbReference type="InParanoid" id="P9WKP9"/>
<dbReference type="OrthoDB" id="4624147at2"/>
<dbReference type="PhylomeDB" id="P9WKP9"/>
<dbReference type="Proteomes" id="UP000001584">
    <property type="component" value="Chromosome"/>
</dbReference>
<dbReference type="GO" id="GO:0005829">
    <property type="term" value="C:cytosol"/>
    <property type="evidence" value="ECO:0007005"/>
    <property type="project" value="MTBBASE"/>
</dbReference>
<dbReference type="GO" id="GO:0005524">
    <property type="term" value="F:ATP binding"/>
    <property type="evidence" value="ECO:0007669"/>
    <property type="project" value="UniProtKB-KW"/>
</dbReference>
<dbReference type="FunFam" id="3.40.50.300:FF:001666">
    <property type="entry name" value="LuxR family transcriptional regulator"/>
    <property type="match status" value="1"/>
</dbReference>
<dbReference type="Gene3D" id="3.40.50.300">
    <property type="entry name" value="P-loop containing nucleotide triphosphate hydrolases"/>
    <property type="match status" value="1"/>
</dbReference>
<dbReference type="InterPro" id="IPR027417">
    <property type="entry name" value="P-loop_NTPase"/>
</dbReference>
<dbReference type="PANTHER" id="PTHR47691:SF3">
    <property type="entry name" value="HTH-TYPE TRANSCRIPTIONAL REGULATOR RV0890C-RELATED"/>
    <property type="match status" value="1"/>
</dbReference>
<dbReference type="PANTHER" id="PTHR47691">
    <property type="entry name" value="REGULATOR-RELATED"/>
    <property type="match status" value="1"/>
</dbReference>
<dbReference type="SUPFAM" id="SSF52540">
    <property type="entry name" value="P-loop containing nucleoside triphosphate hydrolases"/>
    <property type="match status" value="1"/>
</dbReference>
<comment type="miscellaneous">
    <text>Was identified as a high-confidence drug target.</text>
</comment>
<name>Y894_MYCTU</name>
<sequence length="393" mass="42873">MPSRATVQEFSDSYPFCHNGFRPIMMPKIVSVQHSTRRHLTSFVGRKAELNDVRRLLSDKRLVTLTGPDGMGKSRLALQIGAQIAHEFTYGRWDCDLATVTDRDCVSISMLNALGLPVQPGLSAIDTLVGVINDARVLLVLDHCEHLLDACAAIIDSLLRSCPRLTILTTSTEAIGLAGELTWRVPPLSLTNDAIELFVDRARRVRSDFAINADTAVTVGEICRRLDGVPLAIELAAARTDTLSPVEILAGLNDRFRLVAGAAGNAVRPEQTLCATVQWSHALLSGPERALLHRLAVFAGGFDLDGAQAVGANDEDFEGYQTLGRFAELVDKAFVVVENNRGRAGYRLLYSVRQYALEKLSESGEADAVLARYRKHLKQPNQVVRAGSGGVRY</sequence>
<evidence type="ECO:0000255" key="1"/>
<keyword id="KW-0067">ATP-binding</keyword>
<keyword id="KW-0547">Nucleotide-binding</keyword>
<keyword id="KW-1185">Reference proteome</keyword>
<organism>
    <name type="scientific">Mycobacterium tuberculosis (strain ATCC 25618 / H37Rv)</name>
    <dbReference type="NCBI Taxonomy" id="83332"/>
    <lineage>
        <taxon>Bacteria</taxon>
        <taxon>Bacillati</taxon>
        <taxon>Actinomycetota</taxon>
        <taxon>Actinomycetes</taxon>
        <taxon>Mycobacteriales</taxon>
        <taxon>Mycobacteriaceae</taxon>
        <taxon>Mycobacterium</taxon>
        <taxon>Mycobacterium tuberculosis complex</taxon>
    </lineage>
</organism>
<proteinExistence type="predicted"/>
<feature type="chain" id="PRO_0000103735" description="Uncharacterized protein Rv0894">
    <location>
        <begin position="1"/>
        <end position="393"/>
    </location>
</feature>
<feature type="binding site" evidence="1">
    <location>
        <begin position="67"/>
        <end position="74"/>
    </location>
    <ligand>
        <name>ATP</name>
        <dbReference type="ChEBI" id="CHEBI:30616"/>
    </ligand>
</feature>